<protein>
    <recommendedName>
        <fullName evidence="1">ATP-dependent Clp protease proteolytic subunit 3</fullName>
        <ecNumber evidence="1">3.4.21.92</ecNumber>
    </recommendedName>
    <alternativeName>
        <fullName evidence="1">Endopeptidase Clp 3</fullName>
    </alternativeName>
</protein>
<keyword id="KW-0963">Cytoplasm</keyword>
<keyword id="KW-0378">Hydrolase</keyword>
<keyword id="KW-0645">Protease</keyword>
<keyword id="KW-0720">Serine protease</keyword>
<comment type="function">
    <text evidence="1">Cleaves peptides in various proteins in a process that requires ATP hydrolysis. Has a chymotrypsin-like activity. Plays a major role in the degradation of misfolded proteins.</text>
</comment>
<comment type="catalytic activity">
    <reaction evidence="1">
        <text>Hydrolysis of proteins to small peptides in the presence of ATP and magnesium. alpha-casein is the usual test substrate. In the absence of ATP, only oligopeptides shorter than five residues are hydrolyzed (such as succinyl-Leu-Tyr-|-NHMec, and Leu-Tyr-Leu-|-Tyr-Trp, in which cleavage of the -Tyr-|-Leu- and -Tyr-|-Trp bonds also occurs).</text>
        <dbReference type="EC" id="3.4.21.92"/>
    </reaction>
</comment>
<comment type="subunit">
    <text evidence="1">Fourteen ClpP subunits assemble into 2 heptameric rings which stack back to back to give a disk-like structure with a central cavity, resembling the structure of eukaryotic proteasomes.</text>
</comment>
<comment type="subcellular location">
    <subcellularLocation>
        <location evidence="1">Cytoplasm</location>
    </subcellularLocation>
</comment>
<comment type="similarity">
    <text evidence="1">Belongs to the peptidase S14 family.</text>
</comment>
<dbReference type="EC" id="3.4.21.92" evidence="1"/>
<dbReference type="EMBL" id="BX548174">
    <property type="protein sequence ID" value="CAE20115.1"/>
    <property type="molecule type" value="Genomic_DNA"/>
</dbReference>
<dbReference type="SMR" id="Q7UZK7"/>
<dbReference type="STRING" id="59919.PMM1656"/>
<dbReference type="MEROPS" id="S14.001"/>
<dbReference type="KEGG" id="pmm:PMM1656"/>
<dbReference type="eggNOG" id="COG0740">
    <property type="taxonomic scope" value="Bacteria"/>
</dbReference>
<dbReference type="HOGENOM" id="CLU_058707_3_2_3"/>
<dbReference type="OrthoDB" id="571524at2"/>
<dbReference type="Proteomes" id="UP000001026">
    <property type="component" value="Chromosome"/>
</dbReference>
<dbReference type="GO" id="GO:0005737">
    <property type="term" value="C:cytoplasm"/>
    <property type="evidence" value="ECO:0007669"/>
    <property type="project" value="UniProtKB-SubCell"/>
</dbReference>
<dbReference type="GO" id="GO:0009368">
    <property type="term" value="C:endopeptidase Clp complex"/>
    <property type="evidence" value="ECO:0007669"/>
    <property type="project" value="TreeGrafter"/>
</dbReference>
<dbReference type="GO" id="GO:0004176">
    <property type="term" value="F:ATP-dependent peptidase activity"/>
    <property type="evidence" value="ECO:0007669"/>
    <property type="project" value="InterPro"/>
</dbReference>
<dbReference type="GO" id="GO:0051117">
    <property type="term" value="F:ATPase binding"/>
    <property type="evidence" value="ECO:0007669"/>
    <property type="project" value="TreeGrafter"/>
</dbReference>
<dbReference type="GO" id="GO:0004252">
    <property type="term" value="F:serine-type endopeptidase activity"/>
    <property type="evidence" value="ECO:0007669"/>
    <property type="project" value="UniProtKB-UniRule"/>
</dbReference>
<dbReference type="GO" id="GO:0006515">
    <property type="term" value="P:protein quality control for misfolded or incompletely synthesized proteins"/>
    <property type="evidence" value="ECO:0007669"/>
    <property type="project" value="TreeGrafter"/>
</dbReference>
<dbReference type="CDD" id="cd07017">
    <property type="entry name" value="S14_ClpP_2"/>
    <property type="match status" value="1"/>
</dbReference>
<dbReference type="FunFam" id="3.90.226.10:FF:000001">
    <property type="entry name" value="ATP-dependent Clp protease proteolytic subunit"/>
    <property type="match status" value="1"/>
</dbReference>
<dbReference type="Gene3D" id="3.90.226.10">
    <property type="entry name" value="2-enoyl-CoA Hydratase, Chain A, domain 1"/>
    <property type="match status" value="1"/>
</dbReference>
<dbReference type="HAMAP" id="MF_00444">
    <property type="entry name" value="ClpP"/>
    <property type="match status" value="1"/>
</dbReference>
<dbReference type="InterPro" id="IPR001907">
    <property type="entry name" value="ClpP"/>
</dbReference>
<dbReference type="InterPro" id="IPR029045">
    <property type="entry name" value="ClpP/crotonase-like_dom_sf"/>
</dbReference>
<dbReference type="InterPro" id="IPR023562">
    <property type="entry name" value="ClpP/TepA"/>
</dbReference>
<dbReference type="InterPro" id="IPR033135">
    <property type="entry name" value="ClpP_His_AS"/>
</dbReference>
<dbReference type="InterPro" id="IPR018215">
    <property type="entry name" value="ClpP_Ser_AS"/>
</dbReference>
<dbReference type="NCBIfam" id="TIGR00493">
    <property type="entry name" value="clpP"/>
    <property type="match status" value="1"/>
</dbReference>
<dbReference type="NCBIfam" id="NF001368">
    <property type="entry name" value="PRK00277.1"/>
    <property type="match status" value="1"/>
</dbReference>
<dbReference type="NCBIfam" id="NF009205">
    <property type="entry name" value="PRK12553.1"/>
    <property type="match status" value="1"/>
</dbReference>
<dbReference type="PANTHER" id="PTHR10381">
    <property type="entry name" value="ATP-DEPENDENT CLP PROTEASE PROTEOLYTIC SUBUNIT"/>
    <property type="match status" value="1"/>
</dbReference>
<dbReference type="PANTHER" id="PTHR10381:SF70">
    <property type="entry name" value="ATP-DEPENDENT CLP PROTEASE PROTEOLYTIC SUBUNIT"/>
    <property type="match status" value="1"/>
</dbReference>
<dbReference type="Pfam" id="PF00574">
    <property type="entry name" value="CLP_protease"/>
    <property type="match status" value="1"/>
</dbReference>
<dbReference type="PRINTS" id="PR00127">
    <property type="entry name" value="CLPPROTEASEP"/>
</dbReference>
<dbReference type="SUPFAM" id="SSF52096">
    <property type="entry name" value="ClpP/crotonase"/>
    <property type="match status" value="1"/>
</dbReference>
<dbReference type="PROSITE" id="PS00382">
    <property type="entry name" value="CLP_PROTEASE_HIS"/>
    <property type="match status" value="1"/>
</dbReference>
<dbReference type="PROSITE" id="PS00381">
    <property type="entry name" value="CLP_PROTEASE_SER"/>
    <property type="match status" value="1"/>
</dbReference>
<reference key="1">
    <citation type="journal article" date="2003" name="Nature">
        <title>Genome divergence in two Prochlorococcus ecotypes reflects oceanic niche differentiation.</title>
        <authorList>
            <person name="Rocap G."/>
            <person name="Larimer F.W."/>
            <person name="Lamerdin J.E."/>
            <person name="Malfatti S."/>
            <person name="Chain P."/>
            <person name="Ahlgren N.A."/>
            <person name="Arellano A."/>
            <person name="Coleman M."/>
            <person name="Hauser L."/>
            <person name="Hess W.R."/>
            <person name="Johnson Z.I."/>
            <person name="Land M.L."/>
            <person name="Lindell D."/>
            <person name="Post A.F."/>
            <person name="Regala W."/>
            <person name="Shah M."/>
            <person name="Shaw S.L."/>
            <person name="Steglich C."/>
            <person name="Sullivan M.B."/>
            <person name="Ting C.S."/>
            <person name="Tolonen A."/>
            <person name="Webb E.A."/>
            <person name="Zinser E.R."/>
            <person name="Chisholm S.W."/>
        </authorList>
    </citation>
    <scope>NUCLEOTIDE SEQUENCE [LARGE SCALE GENOMIC DNA]</scope>
    <source>
        <strain>CCMP1986 / NIES-2087 / MED4</strain>
    </source>
</reference>
<name>CLPP3_PROMP</name>
<evidence type="ECO:0000255" key="1">
    <source>
        <dbReference type="HAMAP-Rule" id="MF_00444"/>
    </source>
</evidence>
<gene>
    <name evidence="1" type="primary">clpP3</name>
    <name type="ordered locus">PMM1656</name>
</gene>
<accession>Q7UZK7</accession>
<sequence>MYSEKKHLIQSSINSRDIDKSRSAVPTVVEQSGRGERAFDIYSRLLRERIIFLGTGINDQVSDSLVAQLLFLEAEDPHKDIQIYINSPGGSVTAGLAIYDTMQQISPDVVTICFGVAASMGAFLLSGGAKGKRLALPNSRIMIHQPLGGAQGQAVEIEIQAKEILFLKKTLNSLLAKHTNQSLEKINEDTERDYFLSPEEAVEYGLIDKVIKNDK</sequence>
<organism>
    <name type="scientific">Prochlorococcus marinus subsp. pastoris (strain CCMP1986 / NIES-2087 / MED4)</name>
    <dbReference type="NCBI Taxonomy" id="59919"/>
    <lineage>
        <taxon>Bacteria</taxon>
        <taxon>Bacillati</taxon>
        <taxon>Cyanobacteriota</taxon>
        <taxon>Cyanophyceae</taxon>
        <taxon>Synechococcales</taxon>
        <taxon>Prochlorococcaceae</taxon>
        <taxon>Prochlorococcus</taxon>
    </lineage>
</organism>
<feature type="chain" id="PRO_0000179625" description="ATP-dependent Clp protease proteolytic subunit 3">
    <location>
        <begin position="1"/>
        <end position="215"/>
    </location>
</feature>
<feature type="active site" description="Nucleophile" evidence="1">
    <location>
        <position position="119"/>
    </location>
</feature>
<feature type="active site" evidence="1">
    <location>
        <position position="144"/>
    </location>
</feature>
<proteinExistence type="inferred from homology"/>